<sequence length="24" mass="2578">LLKELWTKIKGAGKAVLGKIKGLL</sequence>
<evidence type="ECO:0000269" key="1">
    <source>
    </source>
</evidence>
<evidence type="ECO:0000303" key="2">
    <source>
    </source>
</evidence>
<evidence type="ECO:0000305" key="3"/>
<evidence type="ECO:0000305" key="4">
    <source>
    </source>
</evidence>
<protein>
    <recommendedName>
        <fullName evidence="2">M-poneritoxin-Ng2b</fullName>
        <shortName evidence="2">M-PONTX-Ng2b</shortName>
    </recommendedName>
    <alternativeName>
        <fullName evidence="3">Poneratoxin</fullName>
    </alternativeName>
    <alternativeName>
        <fullName evidence="2">Ponericin-L2</fullName>
    </alternativeName>
</protein>
<dbReference type="GO" id="GO:0005576">
    <property type="term" value="C:extracellular region"/>
    <property type="evidence" value="ECO:0007669"/>
    <property type="project" value="UniProtKB-SubCell"/>
</dbReference>
<dbReference type="GO" id="GO:0042742">
    <property type="term" value="P:defense response to bacterium"/>
    <property type="evidence" value="ECO:0007669"/>
    <property type="project" value="UniProtKB-KW"/>
</dbReference>
<dbReference type="GO" id="GO:0045087">
    <property type="term" value="P:innate immune response"/>
    <property type="evidence" value="ECO:0007669"/>
    <property type="project" value="InterPro"/>
</dbReference>
<dbReference type="InterPro" id="IPR012528">
    <property type="entry name" value="Antimicrobial_9"/>
</dbReference>
<dbReference type="Pfam" id="PF08104">
    <property type="entry name" value="Antimicrobial_9"/>
    <property type="match status" value="1"/>
</dbReference>
<feature type="peptide" id="PRO_0000044193" description="M-poneritoxin-Ng2b" evidence="1">
    <location>
        <begin position="1"/>
        <end position="24"/>
    </location>
</feature>
<feature type="modified residue" description="Leucine amide" evidence="1">
    <location>
        <position position="24"/>
    </location>
</feature>
<name>LTX2B_NEOGO</name>
<organism>
    <name type="scientific">Neoponera goeldii</name>
    <name type="common">Ponerine ant</name>
    <name type="synonym">Pachycondyla goeldii</name>
    <dbReference type="NCBI Taxonomy" id="3057131"/>
    <lineage>
        <taxon>Eukaryota</taxon>
        <taxon>Metazoa</taxon>
        <taxon>Ecdysozoa</taxon>
        <taxon>Arthropoda</taxon>
        <taxon>Hexapoda</taxon>
        <taxon>Insecta</taxon>
        <taxon>Pterygota</taxon>
        <taxon>Neoptera</taxon>
        <taxon>Endopterygota</taxon>
        <taxon>Hymenoptera</taxon>
        <taxon>Apocrita</taxon>
        <taxon>Aculeata</taxon>
        <taxon>Formicoidea</taxon>
        <taxon>Formicidae</taxon>
        <taxon>Ponerinae</taxon>
        <taxon>Ponerini</taxon>
        <taxon>Neoponera</taxon>
    </lineage>
</organism>
<comment type="function">
    <text evidence="1">Has a broad spectrum of activity against both Gram-positive and Gram-negative bacteria. Is inactive against yeast, erythrocytes, and insects.</text>
</comment>
<comment type="subcellular location">
    <subcellularLocation>
        <location evidence="1">Secreted</location>
    </subcellularLocation>
</comment>
<comment type="tissue specificity">
    <text evidence="4">Expressed by the venom gland.</text>
</comment>
<comment type="mass spectrometry" mass="2576.67" method="MALDI" evidence="1"/>
<comment type="similarity">
    <text evidence="3">Belongs to the ponericin-L family.</text>
</comment>
<keyword id="KW-0027">Amidation</keyword>
<keyword id="KW-0044">Antibiotic</keyword>
<keyword id="KW-0929">Antimicrobial</keyword>
<keyword id="KW-0903">Direct protein sequencing</keyword>
<keyword id="KW-0964">Secreted</keyword>
<proteinExistence type="evidence at protein level"/>
<accession>P82422</accession>
<reference key="1">
    <citation type="journal article" date="2001" name="J. Biol. Chem.">
        <title>Ponericins, new antibacterial and insecticidal peptides from the venom of the ant Pachycondyla goeldii.</title>
        <authorList>
            <person name="Orivel J."/>
            <person name="Redeker V."/>
            <person name="Le Caer J.-P."/>
            <person name="Krier F."/>
            <person name="Revol-Junelles A.-M."/>
            <person name="Longeon A."/>
            <person name="Chafotte A."/>
            <person name="Dejean A."/>
            <person name="Rossier J."/>
        </authorList>
    </citation>
    <scope>PROTEIN SEQUENCE</scope>
    <scope>FUNCTION</scope>
    <scope>MASS SPECTROMETRY</scope>
    <scope>AMIDATION AT LEU-24</scope>
    <scope>SUBCELLULAR LOCATION</scope>
    <source>
        <tissue>Venom</tissue>
    </source>
</reference>
<reference key="2">
    <citation type="journal article" date="2016" name="Toxins">
        <title>The biochemical toxin arsenal from ant venoms.</title>
        <authorList>
            <person name="Touchard A."/>
            <person name="Aili S.R."/>
            <person name="Fox E.G."/>
            <person name="Escoubas P."/>
            <person name="Orivel J."/>
            <person name="Nicholson G.M."/>
            <person name="Dejean A."/>
        </authorList>
    </citation>
    <scope>REVIEW</scope>
    <scope>NOMENCLATURE</scope>
</reference>